<gene>
    <name evidence="1" type="primary">uvrC</name>
    <name type="ordered locus">PSPPH_2329</name>
</gene>
<feature type="chain" id="PRO_0000227464" description="UvrABC system protein C">
    <location>
        <begin position="1"/>
        <end position="607"/>
    </location>
</feature>
<feature type="domain" description="GIY-YIG" evidence="1">
    <location>
        <begin position="16"/>
        <end position="94"/>
    </location>
</feature>
<feature type="domain" description="UVR" evidence="1">
    <location>
        <begin position="203"/>
        <end position="238"/>
    </location>
</feature>
<organism>
    <name type="scientific">Pseudomonas savastanoi pv. phaseolicola (strain 1448A / Race 6)</name>
    <name type="common">Pseudomonas syringae pv. phaseolicola (strain 1448A / Race 6)</name>
    <dbReference type="NCBI Taxonomy" id="264730"/>
    <lineage>
        <taxon>Bacteria</taxon>
        <taxon>Pseudomonadati</taxon>
        <taxon>Pseudomonadota</taxon>
        <taxon>Gammaproteobacteria</taxon>
        <taxon>Pseudomonadales</taxon>
        <taxon>Pseudomonadaceae</taxon>
        <taxon>Pseudomonas</taxon>
    </lineage>
</organism>
<name>UVRC_PSE14</name>
<accession>Q48J96</accession>
<proteinExistence type="inferred from homology"/>
<keyword id="KW-0963">Cytoplasm</keyword>
<keyword id="KW-0227">DNA damage</keyword>
<keyword id="KW-0228">DNA excision</keyword>
<keyword id="KW-0234">DNA repair</keyword>
<keyword id="KW-0267">Excision nuclease</keyword>
<keyword id="KW-0742">SOS response</keyword>
<evidence type="ECO:0000255" key="1">
    <source>
        <dbReference type="HAMAP-Rule" id="MF_00203"/>
    </source>
</evidence>
<comment type="function">
    <text evidence="1">The UvrABC repair system catalyzes the recognition and processing of DNA lesions. UvrC both incises the 5' and 3' sides of the lesion. The N-terminal half is responsible for the 3' incision and the C-terminal half is responsible for the 5' incision.</text>
</comment>
<comment type="subunit">
    <text evidence="1">Interacts with UvrB in an incision complex.</text>
</comment>
<comment type="subcellular location">
    <subcellularLocation>
        <location evidence="1">Cytoplasm</location>
    </subcellularLocation>
</comment>
<comment type="similarity">
    <text evidence="1">Belongs to the UvrC family.</text>
</comment>
<sequence length="607" mass="67093">MTQTFDPSAFLATCSGRPGVYRMFDAEATLLYVGKAKNLKKRLASYFRKTGHAPKTGALVSRIAQIETTITGNETEALLLEQTLIKEWRPPYNILLRDDKSYPYVFLSDGNYPRLSIHRGAKKAKGRYFGPYPSAGAIRESLSLLQKTFQVRQCEDSYFKNRTRPCLQYQIKRCKGPCVGLVEPEVYAEDVRHSVMFLEGRSNALSDELNATMEKAAMALDFERAAELRDQVALLRRVQDQQSMDGATGDVDVVAAFVNPGGACVHLISVRGGRVLGSKNFFPQVGIEEEVGEVMSAFLAQYFLGGIDRELPGEVIVNVINDDFPAFVDAVEELRGVEMVISHRVRGTRARWQQMAVTNAEQALTARLANRQHVASRFEALAKVLGLEDPPMRLECYDISHSSGEATVASCVVFGPEGPIKSDYRRFNIEGVTAGDDYAAMHQALTRRYSRIKAGEGKLPDVLLVDGGKGQMSMARDVLNELQVPDLILLGVAKGTTRKAGFETLYLNDAAHEFTLPGDSPALHLIQQIRDEAHRFAITGHRARRGKTRRTSTLEGVAGVGPTRRRDLLKHFGGLQELSRASIDEIAKAPGISKKLAESIYANLHSE</sequence>
<protein>
    <recommendedName>
        <fullName evidence="1">UvrABC system protein C</fullName>
        <shortName evidence="1">Protein UvrC</shortName>
    </recommendedName>
    <alternativeName>
        <fullName evidence="1">Excinuclease ABC subunit C</fullName>
    </alternativeName>
</protein>
<dbReference type="EMBL" id="CP000058">
    <property type="protein sequence ID" value="AAZ33175.1"/>
    <property type="molecule type" value="Genomic_DNA"/>
</dbReference>
<dbReference type="RefSeq" id="WP_011168508.1">
    <property type="nucleotide sequence ID" value="NC_005773.3"/>
</dbReference>
<dbReference type="SMR" id="Q48J96"/>
<dbReference type="KEGG" id="psp:PSPPH_2329"/>
<dbReference type="eggNOG" id="COG0322">
    <property type="taxonomic scope" value="Bacteria"/>
</dbReference>
<dbReference type="HOGENOM" id="CLU_014841_3_0_6"/>
<dbReference type="Proteomes" id="UP000000551">
    <property type="component" value="Chromosome"/>
</dbReference>
<dbReference type="GO" id="GO:0005737">
    <property type="term" value="C:cytoplasm"/>
    <property type="evidence" value="ECO:0007669"/>
    <property type="project" value="UniProtKB-SubCell"/>
</dbReference>
<dbReference type="GO" id="GO:0009380">
    <property type="term" value="C:excinuclease repair complex"/>
    <property type="evidence" value="ECO:0007669"/>
    <property type="project" value="InterPro"/>
</dbReference>
<dbReference type="GO" id="GO:0003677">
    <property type="term" value="F:DNA binding"/>
    <property type="evidence" value="ECO:0007669"/>
    <property type="project" value="UniProtKB-UniRule"/>
</dbReference>
<dbReference type="GO" id="GO:0009381">
    <property type="term" value="F:excinuclease ABC activity"/>
    <property type="evidence" value="ECO:0007669"/>
    <property type="project" value="UniProtKB-UniRule"/>
</dbReference>
<dbReference type="GO" id="GO:0006289">
    <property type="term" value="P:nucleotide-excision repair"/>
    <property type="evidence" value="ECO:0007669"/>
    <property type="project" value="UniProtKB-UniRule"/>
</dbReference>
<dbReference type="GO" id="GO:0009432">
    <property type="term" value="P:SOS response"/>
    <property type="evidence" value="ECO:0007669"/>
    <property type="project" value="UniProtKB-UniRule"/>
</dbReference>
<dbReference type="CDD" id="cd10434">
    <property type="entry name" value="GIY-YIG_UvrC_Cho"/>
    <property type="match status" value="1"/>
</dbReference>
<dbReference type="FunFam" id="1.10.150.20:FF:000005">
    <property type="entry name" value="UvrABC system protein C"/>
    <property type="match status" value="1"/>
</dbReference>
<dbReference type="FunFam" id="3.30.420.340:FF:000001">
    <property type="entry name" value="UvrABC system protein C"/>
    <property type="match status" value="1"/>
</dbReference>
<dbReference type="FunFam" id="3.40.1440.10:FF:000001">
    <property type="entry name" value="UvrABC system protein C"/>
    <property type="match status" value="1"/>
</dbReference>
<dbReference type="Gene3D" id="1.10.150.20">
    <property type="entry name" value="5' to 3' exonuclease, C-terminal subdomain"/>
    <property type="match status" value="1"/>
</dbReference>
<dbReference type="Gene3D" id="3.40.1440.10">
    <property type="entry name" value="GIY-YIG endonuclease"/>
    <property type="match status" value="1"/>
</dbReference>
<dbReference type="Gene3D" id="4.10.860.10">
    <property type="entry name" value="UVR domain"/>
    <property type="match status" value="1"/>
</dbReference>
<dbReference type="Gene3D" id="3.30.420.340">
    <property type="entry name" value="UvrC, RNAse H endonuclease domain"/>
    <property type="match status" value="1"/>
</dbReference>
<dbReference type="HAMAP" id="MF_00203">
    <property type="entry name" value="UvrC"/>
    <property type="match status" value="1"/>
</dbReference>
<dbReference type="InterPro" id="IPR000305">
    <property type="entry name" value="GIY-YIG_endonuc"/>
</dbReference>
<dbReference type="InterPro" id="IPR035901">
    <property type="entry name" value="GIY-YIG_endonuc_sf"/>
</dbReference>
<dbReference type="InterPro" id="IPR047296">
    <property type="entry name" value="GIY-YIG_UvrC_Cho"/>
</dbReference>
<dbReference type="InterPro" id="IPR003583">
    <property type="entry name" value="Hlx-hairpin-Hlx_DNA-bd_motif"/>
</dbReference>
<dbReference type="InterPro" id="IPR010994">
    <property type="entry name" value="RuvA_2-like"/>
</dbReference>
<dbReference type="InterPro" id="IPR001943">
    <property type="entry name" value="UVR_dom"/>
</dbReference>
<dbReference type="InterPro" id="IPR036876">
    <property type="entry name" value="UVR_dom_sf"/>
</dbReference>
<dbReference type="InterPro" id="IPR050066">
    <property type="entry name" value="UvrABC_protein_C"/>
</dbReference>
<dbReference type="InterPro" id="IPR004791">
    <property type="entry name" value="UvrC"/>
</dbReference>
<dbReference type="InterPro" id="IPR001162">
    <property type="entry name" value="UvrC_RNase_H_dom"/>
</dbReference>
<dbReference type="InterPro" id="IPR038476">
    <property type="entry name" value="UvrC_RNase_H_dom_sf"/>
</dbReference>
<dbReference type="NCBIfam" id="NF001824">
    <property type="entry name" value="PRK00558.1-5"/>
    <property type="match status" value="1"/>
</dbReference>
<dbReference type="NCBIfam" id="TIGR00194">
    <property type="entry name" value="uvrC"/>
    <property type="match status" value="1"/>
</dbReference>
<dbReference type="PANTHER" id="PTHR30562:SF1">
    <property type="entry name" value="UVRABC SYSTEM PROTEIN C"/>
    <property type="match status" value="1"/>
</dbReference>
<dbReference type="PANTHER" id="PTHR30562">
    <property type="entry name" value="UVRC/OXIDOREDUCTASE"/>
    <property type="match status" value="1"/>
</dbReference>
<dbReference type="Pfam" id="PF01541">
    <property type="entry name" value="GIY-YIG"/>
    <property type="match status" value="1"/>
</dbReference>
<dbReference type="Pfam" id="PF14520">
    <property type="entry name" value="HHH_5"/>
    <property type="match status" value="1"/>
</dbReference>
<dbReference type="Pfam" id="PF02151">
    <property type="entry name" value="UVR"/>
    <property type="match status" value="1"/>
</dbReference>
<dbReference type="Pfam" id="PF22920">
    <property type="entry name" value="UvrC_RNaseH"/>
    <property type="match status" value="1"/>
</dbReference>
<dbReference type="Pfam" id="PF08459">
    <property type="entry name" value="UvrC_RNaseH_dom"/>
    <property type="match status" value="1"/>
</dbReference>
<dbReference type="SMART" id="SM00465">
    <property type="entry name" value="GIYc"/>
    <property type="match status" value="1"/>
</dbReference>
<dbReference type="SMART" id="SM00278">
    <property type="entry name" value="HhH1"/>
    <property type="match status" value="2"/>
</dbReference>
<dbReference type="SUPFAM" id="SSF46600">
    <property type="entry name" value="C-terminal UvrC-binding domain of UvrB"/>
    <property type="match status" value="1"/>
</dbReference>
<dbReference type="SUPFAM" id="SSF82771">
    <property type="entry name" value="GIY-YIG endonuclease"/>
    <property type="match status" value="1"/>
</dbReference>
<dbReference type="SUPFAM" id="SSF47781">
    <property type="entry name" value="RuvA domain 2-like"/>
    <property type="match status" value="1"/>
</dbReference>
<dbReference type="PROSITE" id="PS50164">
    <property type="entry name" value="GIY_YIG"/>
    <property type="match status" value="1"/>
</dbReference>
<dbReference type="PROSITE" id="PS50151">
    <property type="entry name" value="UVR"/>
    <property type="match status" value="1"/>
</dbReference>
<dbReference type="PROSITE" id="PS50165">
    <property type="entry name" value="UVRC"/>
    <property type="match status" value="1"/>
</dbReference>
<reference key="1">
    <citation type="journal article" date="2005" name="J. Bacteriol.">
        <title>Whole-genome sequence analysis of Pseudomonas syringae pv. phaseolicola 1448A reveals divergence among pathovars in genes involved in virulence and transposition.</title>
        <authorList>
            <person name="Joardar V."/>
            <person name="Lindeberg M."/>
            <person name="Jackson R.W."/>
            <person name="Selengut J."/>
            <person name="Dodson R."/>
            <person name="Brinkac L.M."/>
            <person name="Daugherty S.C."/>
            <person name="DeBoy R.T."/>
            <person name="Durkin A.S."/>
            <person name="Gwinn Giglio M."/>
            <person name="Madupu R."/>
            <person name="Nelson W.C."/>
            <person name="Rosovitz M.J."/>
            <person name="Sullivan S.A."/>
            <person name="Crabtree J."/>
            <person name="Creasy T."/>
            <person name="Davidsen T.M."/>
            <person name="Haft D.H."/>
            <person name="Zafar N."/>
            <person name="Zhou L."/>
            <person name="Halpin R."/>
            <person name="Holley T."/>
            <person name="Khouri H.M."/>
            <person name="Feldblyum T.V."/>
            <person name="White O."/>
            <person name="Fraser C.M."/>
            <person name="Chatterjee A.K."/>
            <person name="Cartinhour S."/>
            <person name="Schneider D."/>
            <person name="Mansfield J.W."/>
            <person name="Collmer A."/>
            <person name="Buell R."/>
        </authorList>
    </citation>
    <scope>NUCLEOTIDE SEQUENCE [LARGE SCALE GENOMIC DNA]</scope>
    <source>
        <strain>1448A / Race 6</strain>
    </source>
</reference>